<reference key="1">
    <citation type="journal article" date="1999" name="Nature">
        <title>Sequence and analysis of chromosome 4 of the plant Arabidopsis thaliana.</title>
        <authorList>
            <person name="Mayer K.F.X."/>
            <person name="Schueller C."/>
            <person name="Wambutt R."/>
            <person name="Murphy G."/>
            <person name="Volckaert G."/>
            <person name="Pohl T."/>
            <person name="Duesterhoeft A."/>
            <person name="Stiekema W."/>
            <person name="Entian K.-D."/>
            <person name="Terryn N."/>
            <person name="Harris B."/>
            <person name="Ansorge W."/>
            <person name="Brandt P."/>
            <person name="Grivell L.A."/>
            <person name="Rieger M."/>
            <person name="Weichselgartner M."/>
            <person name="de Simone V."/>
            <person name="Obermaier B."/>
            <person name="Mache R."/>
            <person name="Mueller M."/>
            <person name="Kreis M."/>
            <person name="Delseny M."/>
            <person name="Puigdomenech P."/>
            <person name="Watson M."/>
            <person name="Schmidtheini T."/>
            <person name="Reichert B."/>
            <person name="Portetelle D."/>
            <person name="Perez-Alonso M."/>
            <person name="Boutry M."/>
            <person name="Bancroft I."/>
            <person name="Vos P."/>
            <person name="Hoheisel J."/>
            <person name="Zimmermann W."/>
            <person name="Wedler H."/>
            <person name="Ridley P."/>
            <person name="Langham S.-A."/>
            <person name="McCullagh B."/>
            <person name="Bilham L."/>
            <person name="Robben J."/>
            <person name="van der Schueren J."/>
            <person name="Grymonprez B."/>
            <person name="Chuang Y.-J."/>
            <person name="Vandenbussche F."/>
            <person name="Braeken M."/>
            <person name="Weltjens I."/>
            <person name="Voet M."/>
            <person name="Bastiaens I."/>
            <person name="Aert R."/>
            <person name="Defoor E."/>
            <person name="Weitzenegger T."/>
            <person name="Bothe G."/>
            <person name="Ramsperger U."/>
            <person name="Hilbert H."/>
            <person name="Braun M."/>
            <person name="Holzer E."/>
            <person name="Brandt A."/>
            <person name="Peters S."/>
            <person name="van Staveren M."/>
            <person name="Dirkse W."/>
            <person name="Mooijman P."/>
            <person name="Klein Lankhorst R."/>
            <person name="Rose M."/>
            <person name="Hauf J."/>
            <person name="Koetter P."/>
            <person name="Berneiser S."/>
            <person name="Hempel S."/>
            <person name="Feldpausch M."/>
            <person name="Lamberth S."/>
            <person name="Van den Daele H."/>
            <person name="De Keyser A."/>
            <person name="Buysshaert C."/>
            <person name="Gielen J."/>
            <person name="Villarroel R."/>
            <person name="De Clercq R."/>
            <person name="van Montagu M."/>
            <person name="Rogers J."/>
            <person name="Cronin A."/>
            <person name="Quail M.A."/>
            <person name="Bray-Allen S."/>
            <person name="Clark L."/>
            <person name="Doggett J."/>
            <person name="Hall S."/>
            <person name="Kay M."/>
            <person name="Lennard N."/>
            <person name="McLay K."/>
            <person name="Mayes R."/>
            <person name="Pettett A."/>
            <person name="Rajandream M.A."/>
            <person name="Lyne M."/>
            <person name="Benes V."/>
            <person name="Rechmann S."/>
            <person name="Borkova D."/>
            <person name="Bloecker H."/>
            <person name="Scharfe M."/>
            <person name="Grimm M."/>
            <person name="Loehnert T.-H."/>
            <person name="Dose S."/>
            <person name="de Haan M."/>
            <person name="Maarse A.C."/>
            <person name="Schaefer M."/>
            <person name="Mueller-Auer S."/>
            <person name="Gabel C."/>
            <person name="Fuchs M."/>
            <person name="Fartmann B."/>
            <person name="Granderath K."/>
            <person name="Dauner D."/>
            <person name="Herzl A."/>
            <person name="Neumann S."/>
            <person name="Argiriou A."/>
            <person name="Vitale D."/>
            <person name="Liguori R."/>
            <person name="Piravandi E."/>
            <person name="Massenet O."/>
            <person name="Quigley F."/>
            <person name="Clabauld G."/>
            <person name="Muendlein A."/>
            <person name="Felber R."/>
            <person name="Schnabl S."/>
            <person name="Hiller R."/>
            <person name="Schmidt W."/>
            <person name="Lecharny A."/>
            <person name="Aubourg S."/>
            <person name="Chefdor F."/>
            <person name="Cooke R."/>
            <person name="Berger C."/>
            <person name="Monfort A."/>
            <person name="Casacuberta E."/>
            <person name="Gibbons T."/>
            <person name="Weber N."/>
            <person name="Vandenbol M."/>
            <person name="Bargues M."/>
            <person name="Terol J."/>
            <person name="Torres A."/>
            <person name="Perez-Perez A."/>
            <person name="Purnelle B."/>
            <person name="Bent E."/>
            <person name="Johnson S."/>
            <person name="Tacon D."/>
            <person name="Jesse T."/>
            <person name="Heijnen L."/>
            <person name="Schwarz S."/>
            <person name="Scholler P."/>
            <person name="Heber S."/>
            <person name="Francs P."/>
            <person name="Bielke C."/>
            <person name="Frishman D."/>
            <person name="Haase D."/>
            <person name="Lemcke K."/>
            <person name="Mewes H.-W."/>
            <person name="Stocker S."/>
            <person name="Zaccaria P."/>
            <person name="Bevan M."/>
            <person name="Wilson R.K."/>
            <person name="de la Bastide M."/>
            <person name="Habermann K."/>
            <person name="Parnell L."/>
            <person name="Dedhia N."/>
            <person name="Gnoj L."/>
            <person name="Schutz K."/>
            <person name="Huang E."/>
            <person name="Spiegel L."/>
            <person name="Sekhon M."/>
            <person name="Murray J."/>
            <person name="Sheet P."/>
            <person name="Cordes M."/>
            <person name="Abu-Threideh J."/>
            <person name="Stoneking T."/>
            <person name="Kalicki J."/>
            <person name="Graves T."/>
            <person name="Harmon G."/>
            <person name="Edwards J."/>
            <person name="Latreille P."/>
            <person name="Courtney L."/>
            <person name="Cloud J."/>
            <person name="Abbott A."/>
            <person name="Scott K."/>
            <person name="Johnson D."/>
            <person name="Minx P."/>
            <person name="Bentley D."/>
            <person name="Fulton B."/>
            <person name="Miller N."/>
            <person name="Greco T."/>
            <person name="Kemp K."/>
            <person name="Kramer J."/>
            <person name="Fulton L."/>
            <person name="Mardis E."/>
            <person name="Dante M."/>
            <person name="Pepin K."/>
            <person name="Hillier L.W."/>
            <person name="Nelson J."/>
            <person name="Spieth J."/>
            <person name="Ryan E."/>
            <person name="Andrews S."/>
            <person name="Geisel C."/>
            <person name="Layman D."/>
            <person name="Du H."/>
            <person name="Ali J."/>
            <person name="Berghoff A."/>
            <person name="Jones K."/>
            <person name="Drone K."/>
            <person name="Cotton M."/>
            <person name="Joshu C."/>
            <person name="Antonoiu B."/>
            <person name="Zidanic M."/>
            <person name="Strong C."/>
            <person name="Sun H."/>
            <person name="Lamar B."/>
            <person name="Yordan C."/>
            <person name="Ma P."/>
            <person name="Zhong J."/>
            <person name="Preston R."/>
            <person name="Vil D."/>
            <person name="Shekher M."/>
            <person name="Matero A."/>
            <person name="Shah R."/>
            <person name="Swaby I.K."/>
            <person name="O'Shaughnessy A."/>
            <person name="Rodriguez M."/>
            <person name="Hoffman J."/>
            <person name="Till S."/>
            <person name="Granat S."/>
            <person name="Shohdy N."/>
            <person name="Hasegawa A."/>
            <person name="Hameed A."/>
            <person name="Lodhi M."/>
            <person name="Johnson A."/>
            <person name="Chen E."/>
            <person name="Marra M.A."/>
            <person name="Martienssen R."/>
            <person name="McCombie W.R."/>
        </authorList>
    </citation>
    <scope>NUCLEOTIDE SEQUENCE [LARGE SCALE GENOMIC DNA]</scope>
    <source>
        <strain>cv. Columbia</strain>
    </source>
</reference>
<reference key="2">
    <citation type="journal article" date="2017" name="Plant J.">
        <title>Araport11: a complete reannotation of the Arabidopsis thaliana reference genome.</title>
        <authorList>
            <person name="Cheng C.Y."/>
            <person name="Krishnakumar V."/>
            <person name="Chan A.P."/>
            <person name="Thibaud-Nissen F."/>
            <person name="Schobel S."/>
            <person name="Town C.D."/>
        </authorList>
    </citation>
    <scope>GENOME REANNOTATION</scope>
    <source>
        <strain>cv. Columbia</strain>
    </source>
</reference>
<reference key="3">
    <citation type="journal article" date="2003" name="Science">
        <title>Empirical analysis of transcriptional activity in the Arabidopsis genome.</title>
        <authorList>
            <person name="Yamada K."/>
            <person name="Lim J."/>
            <person name="Dale J.M."/>
            <person name="Chen H."/>
            <person name="Shinn P."/>
            <person name="Palm C.J."/>
            <person name="Southwick A.M."/>
            <person name="Wu H.C."/>
            <person name="Kim C.J."/>
            <person name="Nguyen M."/>
            <person name="Pham P.K."/>
            <person name="Cheuk R.F."/>
            <person name="Karlin-Newmann G."/>
            <person name="Liu S.X."/>
            <person name="Lam B."/>
            <person name="Sakano H."/>
            <person name="Wu T."/>
            <person name="Yu G."/>
            <person name="Miranda M."/>
            <person name="Quach H.L."/>
            <person name="Tripp M."/>
            <person name="Chang C.H."/>
            <person name="Lee J.M."/>
            <person name="Toriumi M.J."/>
            <person name="Chan M.M."/>
            <person name="Tang C.C."/>
            <person name="Onodera C.S."/>
            <person name="Deng J.M."/>
            <person name="Akiyama K."/>
            <person name="Ansari Y."/>
            <person name="Arakawa T."/>
            <person name="Banh J."/>
            <person name="Banno F."/>
            <person name="Bowser L."/>
            <person name="Brooks S.Y."/>
            <person name="Carninci P."/>
            <person name="Chao Q."/>
            <person name="Choy N."/>
            <person name="Enju A."/>
            <person name="Goldsmith A.D."/>
            <person name="Gurjal M."/>
            <person name="Hansen N.F."/>
            <person name="Hayashizaki Y."/>
            <person name="Johnson-Hopson C."/>
            <person name="Hsuan V.W."/>
            <person name="Iida K."/>
            <person name="Karnes M."/>
            <person name="Khan S."/>
            <person name="Koesema E."/>
            <person name="Ishida J."/>
            <person name="Jiang P.X."/>
            <person name="Jones T."/>
            <person name="Kawai J."/>
            <person name="Kamiya A."/>
            <person name="Meyers C."/>
            <person name="Nakajima M."/>
            <person name="Narusaka M."/>
            <person name="Seki M."/>
            <person name="Sakurai T."/>
            <person name="Satou M."/>
            <person name="Tamse R."/>
            <person name="Vaysberg M."/>
            <person name="Wallender E.K."/>
            <person name="Wong C."/>
            <person name="Yamamura Y."/>
            <person name="Yuan S."/>
            <person name="Shinozaki K."/>
            <person name="Davis R.W."/>
            <person name="Theologis A."/>
            <person name="Ecker J.R."/>
        </authorList>
    </citation>
    <scope>NUCLEOTIDE SEQUENCE [LARGE SCALE MRNA]</scope>
    <source>
        <strain>cv. Columbia</strain>
    </source>
</reference>
<reference key="4">
    <citation type="journal article" date="2007" name="Plant Physiol.">
        <title>A putative hydroxysteroid dehydrogenase involved in regulating plant growth and development.</title>
        <authorList>
            <person name="Li F."/>
            <person name="Asami T."/>
            <person name="Wu X."/>
            <person name="Tsang E.W."/>
            <person name="Cutler A.J."/>
        </authorList>
    </citation>
    <scope>GENE FAMILY</scope>
</reference>
<reference key="5">
    <citation type="journal article" date="2009" name="Plant Cell Physiol.">
        <title>Regulation of HSD1 in seeds of Arabidopsis thaliana.</title>
        <authorList>
            <person name="Baud S."/>
            <person name="Dichow N.R."/>
            <person name="Kelemen Z."/>
            <person name="d'Andrea S."/>
            <person name="To A."/>
            <person name="Berger N."/>
            <person name="Canonge M."/>
            <person name="Kronenberger J."/>
            <person name="Viterbo D."/>
            <person name="Dubreucq B."/>
            <person name="Lepiniec L."/>
            <person name="Chardot T."/>
            <person name="Miquel M."/>
        </authorList>
    </citation>
    <scope>GENE FAMILY</scope>
</reference>
<protein>
    <recommendedName>
        <fullName>11-beta-hydroxysteroid dehydrogenase-like 5</fullName>
        <ecNumber>1.1.1.-</ecNumber>
    </recommendedName>
    <alternativeName>
        <fullName>17-beta-hydroxysteroid dehydrogenase-like 5</fullName>
        <ecNumber>1.1.1.-</ecNumber>
    </alternativeName>
    <alternativeName>
        <fullName>Hydroxysteroid dehydrogenase 5</fullName>
        <shortName>AtHSD5</shortName>
    </alternativeName>
</protein>
<evidence type="ECO:0000250" key="1"/>
<evidence type="ECO:0000255" key="2"/>
<evidence type="ECO:0000255" key="3">
    <source>
        <dbReference type="PROSITE-ProRule" id="PRU10001"/>
    </source>
</evidence>
<evidence type="ECO:0000256" key="4">
    <source>
        <dbReference type="SAM" id="MobiDB-lite"/>
    </source>
</evidence>
<evidence type="ECO:0000305" key="5"/>
<sequence>MVDLLNSVMNLVAPPATMVVMAFAWPLLSFISFSERAYNSYFATENMEDKVVVITGASSAIGEQIAYEYAKRGANLVLVARREQRLRVVSNKAKQIGANHVIIIAADVIKEDDCRRFITQAVNYYGRVDHLVNTASLGHTFYFEEVSDTTVFPHLLDINFWGNVYPTYVALPYLHQTNGRIVVNASVENWLPLPRMSLYSAAKAALVNFYETLRFELNGDVGITIATHGWIGSEMSGGKFMLEEGAEMQWKEEREVPANGGPLEEFAKMIVAGACRGDAYVKFPNWYDVFLLYRVFTPNVLRWTFKLLLSTEGTRRSSLVGVGSGMPVDESSSQMKLMLEGGPPRVPASPPRYTASPPHYTASPPRYPASPPRYPASPPRFSQFNIQEL</sequence>
<organism>
    <name type="scientific">Arabidopsis thaliana</name>
    <name type="common">Mouse-ear cress</name>
    <dbReference type="NCBI Taxonomy" id="3702"/>
    <lineage>
        <taxon>Eukaryota</taxon>
        <taxon>Viridiplantae</taxon>
        <taxon>Streptophyta</taxon>
        <taxon>Embryophyta</taxon>
        <taxon>Tracheophyta</taxon>
        <taxon>Spermatophyta</taxon>
        <taxon>Magnoliopsida</taxon>
        <taxon>eudicotyledons</taxon>
        <taxon>Gunneridae</taxon>
        <taxon>Pentapetalae</taxon>
        <taxon>rosids</taxon>
        <taxon>malvids</taxon>
        <taxon>Brassicales</taxon>
        <taxon>Brassicaceae</taxon>
        <taxon>Camelineae</taxon>
        <taxon>Arabidopsis</taxon>
    </lineage>
</organism>
<comment type="subcellular location">
    <subcellularLocation>
        <location evidence="5">Membrane</location>
        <topology evidence="5">Single-pass type II membrane protein</topology>
    </subcellularLocation>
</comment>
<comment type="similarity">
    <text evidence="5">Belongs to the short-chain dehydrogenases/reductases (SDR) family.</text>
</comment>
<comment type="sequence caution" evidence="5">
    <conflict type="frameshift">
        <sequence resource="EMBL" id="BT004103"/>
    </conflict>
</comment>
<gene>
    <name type="primary">HSD5</name>
    <name type="ordered locus">At4g10020</name>
    <name type="ORF">T5L19.150</name>
</gene>
<accession>Q9T0G0</accession>
<name>HSD5_ARATH</name>
<feature type="chain" id="PRO_0000422284" description="11-beta-hydroxysteroid dehydrogenase-like 5">
    <location>
        <begin position="1"/>
        <end position="389"/>
    </location>
</feature>
<feature type="transmembrane region" description="Helical; Signal-anchor for type II membrane protein" evidence="2">
    <location>
        <begin position="11"/>
        <end position="31"/>
    </location>
</feature>
<feature type="region of interest" description="Disordered" evidence="4">
    <location>
        <begin position="337"/>
        <end position="381"/>
    </location>
</feature>
<feature type="compositionally biased region" description="Pro residues" evidence="4">
    <location>
        <begin position="365"/>
        <end position="378"/>
    </location>
</feature>
<feature type="active site" description="Proton acceptor" evidence="3">
    <location>
        <position position="199"/>
    </location>
</feature>
<feature type="binding site" evidence="1">
    <location>
        <begin position="56"/>
        <end position="82"/>
    </location>
    <ligand>
        <name>NADP(+)</name>
        <dbReference type="ChEBI" id="CHEBI:58349"/>
    </ligand>
</feature>
<feature type="binding site" evidence="1">
    <location>
        <position position="107"/>
    </location>
    <ligand>
        <name>NADP(+)</name>
        <dbReference type="ChEBI" id="CHEBI:58349"/>
    </ligand>
</feature>
<feature type="binding site" evidence="1">
    <location>
        <position position="186"/>
    </location>
    <ligand>
        <name>substrate</name>
    </ligand>
</feature>
<feature type="binding site" evidence="1">
    <location>
        <begin position="199"/>
        <end position="203"/>
    </location>
    <ligand>
        <name>NADP(+)</name>
        <dbReference type="ChEBI" id="CHEBI:58349"/>
    </ligand>
</feature>
<feature type="binding site" evidence="1">
    <location>
        <position position="203"/>
    </location>
    <ligand>
        <name>NADP(+)</name>
        <dbReference type="ChEBI" id="CHEBI:58349"/>
    </ligand>
</feature>
<dbReference type="EC" id="1.1.1.-"/>
<dbReference type="EMBL" id="AL049481">
    <property type="protein sequence ID" value="CAB39626.1"/>
    <property type="molecule type" value="Genomic_DNA"/>
</dbReference>
<dbReference type="EMBL" id="AL161516">
    <property type="protein sequence ID" value="CAB78125.1"/>
    <property type="molecule type" value="Genomic_DNA"/>
</dbReference>
<dbReference type="EMBL" id="CP002687">
    <property type="protein sequence ID" value="AEE82830.1"/>
    <property type="molecule type" value="Genomic_DNA"/>
</dbReference>
<dbReference type="EMBL" id="BT004103">
    <property type="status" value="NOT_ANNOTATED_CDS"/>
    <property type="molecule type" value="mRNA"/>
</dbReference>
<dbReference type="PIR" id="T04006">
    <property type="entry name" value="T04006"/>
</dbReference>
<dbReference type="RefSeq" id="NP_192740.1">
    <property type="nucleotide sequence ID" value="NM_117070.5"/>
</dbReference>
<dbReference type="SMR" id="Q9T0G0"/>
<dbReference type="BioGRID" id="11892">
    <property type="interactions" value="1"/>
</dbReference>
<dbReference type="FunCoup" id="Q9T0G0">
    <property type="interactions" value="148"/>
</dbReference>
<dbReference type="STRING" id="3702.Q9T0G0"/>
<dbReference type="PaxDb" id="3702-AT4G10020.1"/>
<dbReference type="ProteomicsDB" id="228750"/>
<dbReference type="EnsemblPlants" id="AT4G10020.1">
    <property type="protein sequence ID" value="AT4G10020.1"/>
    <property type="gene ID" value="AT4G10020"/>
</dbReference>
<dbReference type="GeneID" id="826593"/>
<dbReference type="Gramene" id="AT4G10020.1">
    <property type="protein sequence ID" value="AT4G10020.1"/>
    <property type="gene ID" value="AT4G10020"/>
</dbReference>
<dbReference type="KEGG" id="ath:AT4G10020"/>
<dbReference type="Araport" id="AT4G10020"/>
<dbReference type="TAIR" id="AT4G10020">
    <property type="gene designation" value="HSD5"/>
</dbReference>
<dbReference type="eggNOG" id="KOG1205">
    <property type="taxonomic scope" value="Eukaryota"/>
</dbReference>
<dbReference type="HOGENOM" id="CLU_010194_2_1_1"/>
<dbReference type="InParanoid" id="Q9T0G0"/>
<dbReference type="OMA" id="MAFAWPL"/>
<dbReference type="PhylomeDB" id="Q9T0G0"/>
<dbReference type="BioCyc" id="ARA:AT4G10020-MONOMER"/>
<dbReference type="PRO" id="PR:Q9T0G0"/>
<dbReference type="Proteomes" id="UP000006548">
    <property type="component" value="Chromosome 4"/>
</dbReference>
<dbReference type="ExpressionAtlas" id="Q9T0G0">
    <property type="expression patterns" value="baseline and differential"/>
</dbReference>
<dbReference type="GO" id="GO:0016020">
    <property type="term" value="C:membrane"/>
    <property type="evidence" value="ECO:0007669"/>
    <property type="project" value="UniProtKB-SubCell"/>
</dbReference>
<dbReference type="GO" id="GO:0016491">
    <property type="term" value="F:oxidoreductase activity"/>
    <property type="evidence" value="ECO:0007669"/>
    <property type="project" value="UniProtKB-KW"/>
</dbReference>
<dbReference type="GO" id="GO:0006694">
    <property type="term" value="P:steroid biosynthetic process"/>
    <property type="evidence" value="ECO:0007669"/>
    <property type="project" value="UniProtKB-KW"/>
</dbReference>
<dbReference type="Gene3D" id="3.40.50.720">
    <property type="entry name" value="NAD(P)-binding Rossmann-like Domain"/>
    <property type="match status" value="1"/>
</dbReference>
<dbReference type="InterPro" id="IPR036291">
    <property type="entry name" value="NAD(P)-bd_dom_sf"/>
</dbReference>
<dbReference type="InterPro" id="IPR020904">
    <property type="entry name" value="Sc_DH/Rdtase_CS"/>
</dbReference>
<dbReference type="InterPro" id="IPR002347">
    <property type="entry name" value="SDR_fam"/>
</dbReference>
<dbReference type="PANTHER" id="PTHR43391:SF14">
    <property type="entry name" value="DEHYDROGENASE_REDUCTASE SDR FAMILY PROTEIN 7-LIKE"/>
    <property type="match status" value="1"/>
</dbReference>
<dbReference type="PANTHER" id="PTHR43391">
    <property type="entry name" value="RETINOL DEHYDROGENASE-RELATED"/>
    <property type="match status" value="1"/>
</dbReference>
<dbReference type="Pfam" id="PF00106">
    <property type="entry name" value="adh_short"/>
    <property type="match status" value="1"/>
</dbReference>
<dbReference type="PRINTS" id="PR00081">
    <property type="entry name" value="GDHRDH"/>
</dbReference>
<dbReference type="PRINTS" id="PR00080">
    <property type="entry name" value="SDRFAMILY"/>
</dbReference>
<dbReference type="SUPFAM" id="SSF51735">
    <property type="entry name" value="NAD(P)-binding Rossmann-fold domains"/>
    <property type="match status" value="1"/>
</dbReference>
<dbReference type="PROSITE" id="PS00061">
    <property type="entry name" value="ADH_SHORT"/>
    <property type="match status" value="1"/>
</dbReference>
<proteinExistence type="evidence at transcript level"/>
<keyword id="KW-0444">Lipid biosynthesis</keyword>
<keyword id="KW-0443">Lipid metabolism</keyword>
<keyword id="KW-0472">Membrane</keyword>
<keyword id="KW-0521">NADP</keyword>
<keyword id="KW-0560">Oxidoreductase</keyword>
<keyword id="KW-1185">Reference proteome</keyword>
<keyword id="KW-0735">Signal-anchor</keyword>
<keyword id="KW-0752">Steroid biosynthesis</keyword>
<keyword id="KW-0812">Transmembrane</keyword>
<keyword id="KW-1133">Transmembrane helix</keyword>